<accession>Q8VI94</accession>
<accession>Q3UBP8</accession>
<accession>Q8K2A2</accession>
<accession>Q8QZV5</accession>
<protein>
    <recommendedName>
        <fullName>2'-5'-oligoadenylate synthase-like protein 1</fullName>
    </recommendedName>
    <alternativeName>
        <fullName>2',5'-oligoadenylate synthetase-like 9</fullName>
    </alternativeName>
</protein>
<reference key="1">
    <citation type="journal article" date="2002" name="Am. J. Physiol.">
        <title>Glucocorticoid-attenuated response genes induced in the lung during endotoxemia.</title>
        <authorList>
            <person name="Smith J.B."/>
            <person name="Nguyen T.T."/>
            <person name="Hughes H.J."/>
            <person name="Herschman H.R."/>
            <person name="Widney D.P."/>
            <person name="Bui K.C."/>
            <person name="Rovai L.E."/>
        </authorList>
    </citation>
    <scope>NUCLEOTIDE SEQUENCE [MRNA]</scope>
    <source>
        <strain>Czech II</strain>
    </source>
</reference>
<reference key="2">
    <citation type="journal article" date="2002" name="Cell. Mol. Life Sci.">
        <title>Gene structure of the murine 2'-5'-oligoadenylate synthetase family.</title>
        <authorList>
            <person name="Eskildsen S."/>
            <person name="Hartmann R."/>
            <person name="Kjeldgaard N.O."/>
            <person name="Justesen J."/>
        </authorList>
    </citation>
    <scope>NUCLEOTIDE SEQUENCE [MRNA]</scope>
    <source>
        <strain>FVB/N</strain>
        <tissue>Intestine</tissue>
    </source>
</reference>
<reference key="3">
    <citation type="journal article" date="2002" name="J. Interferon Cytokine Res.">
        <title>Genomic structure of the mouse 2',5'-oligoadenylate synthetase gene family.</title>
        <authorList>
            <person name="Kakuta S."/>
            <person name="Shibata S."/>
            <person name="Iwakura Y."/>
        </authorList>
    </citation>
    <scope>NUCLEOTIDE SEQUENCE [MRNA]</scope>
    <scope>FUNCTION</scope>
    <scope>TISSUE SPECIFICITY</scope>
    <source>
        <strain>C57BL/6J</strain>
        <tissue>Colon</tissue>
    </source>
</reference>
<reference key="4">
    <citation type="journal article" date="2002" name="Proc. Natl. Acad. Sci. U.S.A.">
        <title>Positional cloning of the murine flavivirus resistance gene.</title>
        <authorList>
            <person name="Perelygin A.A."/>
            <person name="Scherbik S.V."/>
            <person name="Zhulin I.B."/>
            <person name="Stockman B.M."/>
            <person name="Li Y."/>
            <person name="Brinton M.A."/>
        </authorList>
    </citation>
    <scope>NUCLEOTIDE SEQUENCE [MRNA]</scope>
    <source>
        <strain>C3H/He</strain>
    </source>
</reference>
<reference key="5">
    <citation type="journal article" date="2005" name="Science">
        <title>The transcriptional landscape of the mammalian genome.</title>
        <authorList>
            <person name="Carninci P."/>
            <person name="Kasukawa T."/>
            <person name="Katayama S."/>
            <person name="Gough J."/>
            <person name="Frith M.C."/>
            <person name="Maeda N."/>
            <person name="Oyama R."/>
            <person name="Ravasi T."/>
            <person name="Lenhard B."/>
            <person name="Wells C."/>
            <person name="Kodzius R."/>
            <person name="Shimokawa K."/>
            <person name="Bajic V.B."/>
            <person name="Brenner S.E."/>
            <person name="Batalov S."/>
            <person name="Forrest A.R."/>
            <person name="Zavolan M."/>
            <person name="Davis M.J."/>
            <person name="Wilming L.G."/>
            <person name="Aidinis V."/>
            <person name="Allen J.E."/>
            <person name="Ambesi-Impiombato A."/>
            <person name="Apweiler R."/>
            <person name="Aturaliya R.N."/>
            <person name="Bailey T.L."/>
            <person name="Bansal M."/>
            <person name="Baxter L."/>
            <person name="Beisel K.W."/>
            <person name="Bersano T."/>
            <person name="Bono H."/>
            <person name="Chalk A.M."/>
            <person name="Chiu K.P."/>
            <person name="Choudhary V."/>
            <person name="Christoffels A."/>
            <person name="Clutterbuck D.R."/>
            <person name="Crowe M.L."/>
            <person name="Dalla E."/>
            <person name="Dalrymple B.P."/>
            <person name="de Bono B."/>
            <person name="Della Gatta G."/>
            <person name="di Bernardo D."/>
            <person name="Down T."/>
            <person name="Engstrom P."/>
            <person name="Fagiolini M."/>
            <person name="Faulkner G."/>
            <person name="Fletcher C.F."/>
            <person name="Fukushima T."/>
            <person name="Furuno M."/>
            <person name="Futaki S."/>
            <person name="Gariboldi M."/>
            <person name="Georgii-Hemming P."/>
            <person name="Gingeras T.R."/>
            <person name="Gojobori T."/>
            <person name="Green R.E."/>
            <person name="Gustincich S."/>
            <person name="Harbers M."/>
            <person name="Hayashi Y."/>
            <person name="Hensch T.K."/>
            <person name="Hirokawa N."/>
            <person name="Hill D."/>
            <person name="Huminiecki L."/>
            <person name="Iacono M."/>
            <person name="Ikeo K."/>
            <person name="Iwama A."/>
            <person name="Ishikawa T."/>
            <person name="Jakt M."/>
            <person name="Kanapin A."/>
            <person name="Katoh M."/>
            <person name="Kawasawa Y."/>
            <person name="Kelso J."/>
            <person name="Kitamura H."/>
            <person name="Kitano H."/>
            <person name="Kollias G."/>
            <person name="Krishnan S.P."/>
            <person name="Kruger A."/>
            <person name="Kummerfeld S.K."/>
            <person name="Kurochkin I.V."/>
            <person name="Lareau L.F."/>
            <person name="Lazarevic D."/>
            <person name="Lipovich L."/>
            <person name="Liu J."/>
            <person name="Liuni S."/>
            <person name="McWilliam S."/>
            <person name="Madan Babu M."/>
            <person name="Madera M."/>
            <person name="Marchionni L."/>
            <person name="Matsuda H."/>
            <person name="Matsuzawa S."/>
            <person name="Miki H."/>
            <person name="Mignone F."/>
            <person name="Miyake S."/>
            <person name="Morris K."/>
            <person name="Mottagui-Tabar S."/>
            <person name="Mulder N."/>
            <person name="Nakano N."/>
            <person name="Nakauchi H."/>
            <person name="Ng P."/>
            <person name="Nilsson R."/>
            <person name="Nishiguchi S."/>
            <person name="Nishikawa S."/>
            <person name="Nori F."/>
            <person name="Ohara O."/>
            <person name="Okazaki Y."/>
            <person name="Orlando V."/>
            <person name="Pang K.C."/>
            <person name="Pavan W.J."/>
            <person name="Pavesi G."/>
            <person name="Pesole G."/>
            <person name="Petrovsky N."/>
            <person name="Piazza S."/>
            <person name="Reed J."/>
            <person name="Reid J.F."/>
            <person name="Ring B.Z."/>
            <person name="Ringwald M."/>
            <person name="Rost B."/>
            <person name="Ruan Y."/>
            <person name="Salzberg S.L."/>
            <person name="Sandelin A."/>
            <person name="Schneider C."/>
            <person name="Schoenbach C."/>
            <person name="Sekiguchi K."/>
            <person name="Semple C.A."/>
            <person name="Seno S."/>
            <person name="Sessa L."/>
            <person name="Sheng Y."/>
            <person name="Shibata Y."/>
            <person name="Shimada H."/>
            <person name="Shimada K."/>
            <person name="Silva D."/>
            <person name="Sinclair B."/>
            <person name="Sperling S."/>
            <person name="Stupka E."/>
            <person name="Sugiura K."/>
            <person name="Sultana R."/>
            <person name="Takenaka Y."/>
            <person name="Taki K."/>
            <person name="Tammoja K."/>
            <person name="Tan S.L."/>
            <person name="Tang S."/>
            <person name="Taylor M.S."/>
            <person name="Tegner J."/>
            <person name="Teichmann S.A."/>
            <person name="Ueda H.R."/>
            <person name="van Nimwegen E."/>
            <person name="Verardo R."/>
            <person name="Wei C.L."/>
            <person name="Yagi K."/>
            <person name="Yamanishi H."/>
            <person name="Zabarovsky E."/>
            <person name="Zhu S."/>
            <person name="Zimmer A."/>
            <person name="Hide W."/>
            <person name="Bult C."/>
            <person name="Grimmond S.M."/>
            <person name="Teasdale R.D."/>
            <person name="Liu E.T."/>
            <person name="Brusic V."/>
            <person name="Quackenbush J."/>
            <person name="Wahlestedt C."/>
            <person name="Mattick J.S."/>
            <person name="Hume D.A."/>
            <person name="Kai C."/>
            <person name="Sasaki D."/>
            <person name="Tomaru Y."/>
            <person name="Fukuda S."/>
            <person name="Kanamori-Katayama M."/>
            <person name="Suzuki M."/>
            <person name="Aoki J."/>
            <person name="Arakawa T."/>
            <person name="Iida J."/>
            <person name="Imamura K."/>
            <person name="Itoh M."/>
            <person name="Kato T."/>
            <person name="Kawaji H."/>
            <person name="Kawagashira N."/>
            <person name="Kawashima T."/>
            <person name="Kojima M."/>
            <person name="Kondo S."/>
            <person name="Konno H."/>
            <person name="Nakano K."/>
            <person name="Ninomiya N."/>
            <person name="Nishio T."/>
            <person name="Okada M."/>
            <person name="Plessy C."/>
            <person name="Shibata K."/>
            <person name="Shiraki T."/>
            <person name="Suzuki S."/>
            <person name="Tagami M."/>
            <person name="Waki K."/>
            <person name="Watahiki A."/>
            <person name="Okamura-Oho Y."/>
            <person name="Suzuki H."/>
            <person name="Kawai J."/>
            <person name="Hayashizaki Y."/>
        </authorList>
    </citation>
    <scope>NUCLEOTIDE SEQUENCE [LARGE SCALE MRNA]</scope>
    <source>
        <strain>C57BL/6J</strain>
        <tissue>Bone marrow</tissue>
        <tissue>Eye</tissue>
        <tissue>Kidney</tissue>
    </source>
</reference>
<reference key="6">
    <citation type="journal article" date="2009" name="PLoS Biol.">
        <title>Lineage-specific biology revealed by a finished genome assembly of the mouse.</title>
        <authorList>
            <person name="Church D.M."/>
            <person name="Goodstadt L."/>
            <person name="Hillier L.W."/>
            <person name="Zody M.C."/>
            <person name="Goldstein S."/>
            <person name="She X."/>
            <person name="Bult C.J."/>
            <person name="Agarwala R."/>
            <person name="Cherry J.L."/>
            <person name="DiCuccio M."/>
            <person name="Hlavina W."/>
            <person name="Kapustin Y."/>
            <person name="Meric P."/>
            <person name="Maglott D."/>
            <person name="Birtle Z."/>
            <person name="Marques A.C."/>
            <person name="Graves T."/>
            <person name="Zhou S."/>
            <person name="Teague B."/>
            <person name="Potamousis K."/>
            <person name="Churas C."/>
            <person name="Place M."/>
            <person name="Herschleb J."/>
            <person name="Runnheim R."/>
            <person name="Forrest D."/>
            <person name="Amos-Landgraf J."/>
            <person name="Schwartz D.C."/>
            <person name="Cheng Z."/>
            <person name="Lindblad-Toh K."/>
            <person name="Eichler E.E."/>
            <person name="Ponting C.P."/>
        </authorList>
    </citation>
    <scope>NUCLEOTIDE SEQUENCE [LARGE SCALE GENOMIC DNA]</scope>
    <source>
        <strain>C57BL/6J</strain>
    </source>
</reference>
<reference key="7">
    <citation type="journal article" date="2004" name="Genome Res.">
        <title>The status, quality, and expansion of the NIH full-length cDNA project: the Mammalian Gene Collection (MGC).</title>
        <authorList>
            <consortium name="The MGC Project Team"/>
        </authorList>
    </citation>
    <scope>NUCLEOTIDE SEQUENCE [LARGE SCALE MRNA]</scope>
    <source>
        <strain>Czech II</strain>
        <tissue>Mammary tumor</tissue>
    </source>
</reference>
<reference key="8">
    <citation type="journal article" date="2003" name="Nucleic Acids Res.">
        <title>Characterization of the 2'-5'-oligoadenylate synthetase ubiquitin-like family.</title>
        <authorList>
            <person name="Eskildsen S."/>
            <person name="Justesen J."/>
            <person name="Schierup M.H."/>
            <person name="Hartmann R."/>
        </authorList>
    </citation>
    <scope>FUNCTION</scope>
    <scope>INDUCTION</scope>
</reference>
<reference key="9">
    <citation type="journal article" date="2006" name="J. Mol. Evol.">
        <title>The mammalian 2'-5' oligoadenylate synthetase gene family: evidence for concerted evolution of paralogous Oas1 genes in Rodentia and Artiodactyla.</title>
        <authorList>
            <person name="Perelygin A.A."/>
            <person name="Zharkikh A.A."/>
            <person name="Scherbik S.V."/>
            <person name="Brinton M.A."/>
        </authorList>
    </citation>
    <scope>REVIEW</scope>
</reference>
<sequence>MAVAQELYGFPASKLDSFVAQWLQPTREWKEEVLETVQTVEQFLRQENFREDRGPARDVRVLKVLKVGCFGNGTVLRSTTDVELVVFLSCFHSFQEEAKHHQAVLRLIQKRMYYCQELMDLGLSNLSVTNRVPSSLIFTIQTRETWETITVTVVPAYRALGPSCPSSEVYANLIKANGYPGNFSPSFSELQRNFVKHRPTKLKSLLRLVKHWYQQYVRDKCPRANLPPLYALELLTVYAWEAGTREDANFRLDEGLATVMELLQDHELLCIYWTKHYTLQHPVIEACVRRQLRGQRPIILDPADPTNNVAEGYRWDIVAQRANQCLKQDCCYDNRDSPVPSWRVKRAPDIQVTVQEWGHSDLTFWVNPYEPIKKLKEKIQLSQGYLGLQRLSFQEPGGERQLIRSHCTLAYYGIFCDTHICLLDTISPEIQVFVKNPDGRSHAYAIHPLDYVLNLKQQIEDRQGLRCQEQRLEFQGHILEDWFDFKSYGIQDSVTVILSKTTEGAAPFVPS</sequence>
<comment type="function">
    <text evidence="3 4">Does not have 2'-5'-OAS activity, but can bind double-stranded RNA. Displays antiviral activity via an alternative antiviral pathway independent of RNase L.</text>
</comment>
<comment type="subunit">
    <text evidence="1">Specifically interacts with the ligand binding domain of the thyroid receptor (TR). TRIP14 does not require the presence of thyroid hormone for its interaction. Binds MBD1 (By similarity).</text>
</comment>
<comment type="subcellular location">
    <subcellularLocation>
        <location evidence="1">Nucleus</location>
        <location evidence="1">Nucleolus</location>
    </subcellularLocation>
    <subcellularLocation>
        <location evidence="1">Cytoplasm</location>
    </subcellularLocation>
</comment>
<comment type="induction">
    <text evidence="4">By type I interferon (IFN) and viruses.</text>
</comment>
<comment type="similarity">
    <text evidence="5">Belongs to the 2-5A synthase family.</text>
</comment>
<comment type="sequence caution" evidence="5">
    <conflict type="frameshift">
        <sequence resource="EMBL-CDS" id="BAE29916"/>
    </conflict>
</comment>
<dbReference type="EMBL" id="AF426289">
    <property type="protein sequence ID" value="AAN31518.1"/>
    <property type="molecule type" value="mRNA"/>
</dbReference>
<dbReference type="EMBL" id="AY089728">
    <property type="protein sequence ID" value="AAM08092.1"/>
    <property type="molecule type" value="mRNA"/>
</dbReference>
<dbReference type="EMBL" id="AY057107">
    <property type="protein sequence ID" value="AAL12828.1"/>
    <property type="molecule type" value="mRNA"/>
</dbReference>
<dbReference type="EMBL" id="AB067533">
    <property type="protein sequence ID" value="BAB84133.1"/>
    <property type="molecule type" value="mRNA"/>
</dbReference>
<dbReference type="EMBL" id="AK078690">
    <property type="protein sequence ID" value="BAC37360.1"/>
    <property type="molecule type" value="mRNA"/>
</dbReference>
<dbReference type="EMBL" id="AK149824">
    <property type="protein sequence ID" value="BAE29106.1"/>
    <property type="molecule type" value="mRNA"/>
</dbReference>
<dbReference type="EMBL" id="AK150863">
    <property type="protein sequence ID" value="BAE29916.1"/>
    <property type="status" value="ALT_FRAME"/>
    <property type="molecule type" value="mRNA"/>
</dbReference>
<dbReference type="EMBL" id="AK165578">
    <property type="protein sequence ID" value="BAE38269.1"/>
    <property type="molecule type" value="mRNA"/>
</dbReference>
<dbReference type="EMBL" id="AC116500">
    <property type="status" value="NOT_ANNOTATED_CDS"/>
    <property type="molecule type" value="Genomic_DNA"/>
</dbReference>
<dbReference type="EMBL" id="BC032152">
    <property type="protein sequence ID" value="AAH32152.1"/>
    <property type="molecule type" value="mRNA"/>
</dbReference>
<dbReference type="CCDS" id="CCDS19575.1"/>
<dbReference type="RefSeq" id="NP_001346874.1">
    <property type="nucleotide sequence ID" value="NM_001359945.1"/>
</dbReference>
<dbReference type="RefSeq" id="NP_660210.1">
    <property type="nucleotide sequence ID" value="NM_145209.3"/>
</dbReference>
<dbReference type="RefSeq" id="XP_006530357.1">
    <property type="nucleotide sequence ID" value="XM_006530294.3"/>
</dbReference>
<dbReference type="SMR" id="Q8VI94"/>
<dbReference type="FunCoup" id="Q8VI94">
    <property type="interactions" value="327"/>
</dbReference>
<dbReference type="STRING" id="10090.ENSMUSP00000107771"/>
<dbReference type="GlyGen" id="Q8VI94">
    <property type="glycosylation" value="1 site, 1 O-linked glycan (1 site)"/>
</dbReference>
<dbReference type="iPTMnet" id="Q8VI94"/>
<dbReference type="PhosphoSitePlus" id="Q8VI94"/>
<dbReference type="SwissPalm" id="Q8VI94"/>
<dbReference type="jPOST" id="Q8VI94"/>
<dbReference type="PaxDb" id="10090-ENSMUSP00000031540"/>
<dbReference type="PeptideAtlas" id="Q8VI94"/>
<dbReference type="ProteomicsDB" id="294262"/>
<dbReference type="Antibodypedia" id="808">
    <property type="antibodies" value="169 antibodies from 26 providers"/>
</dbReference>
<dbReference type="DNASU" id="231655"/>
<dbReference type="Ensembl" id="ENSMUST00000031540.11">
    <property type="protein sequence ID" value="ENSMUSP00000031540.5"/>
    <property type="gene ID" value="ENSMUSG00000041827.16"/>
</dbReference>
<dbReference type="Ensembl" id="ENSMUST00000112143.4">
    <property type="protein sequence ID" value="ENSMUSP00000107771.4"/>
    <property type="gene ID" value="ENSMUSG00000041827.16"/>
</dbReference>
<dbReference type="GeneID" id="231655"/>
<dbReference type="KEGG" id="mmu:231655"/>
<dbReference type="UCSC" id="uc008zcv.1">
    <property type="organism name" value="mouse"/>
</dbReference>
<dbReference type="AGR" id="MGI:2180849"/>
<dbReference type="CTD" id="231655"/>
<dbReference type="MGI" id="MGI:2180849">
    <property type="gene designation" value="Oasl1"/>
</dbReference>
<dbReference type="VEuPathDB" id="HostDB:ENSMUSG00000041827"/>
<dbReference type="eggNOG" id="KOG0001">
    <property type="taxonomic scope" value="Eukaryota"/>
</dbReference>
<dbReference type="GeneTree" id="ENSGT00510000046406"/>
<dbReference type="HOGENOM" id="CLU_040930_1_0_1"/>
<dbReference type="InParanoid" id="Q8VI94"/>
<dbReference type="OMA" id="VICIYWT"/>
<dbReference type="OrthoDB" id="1885901at2759"/>
<dbReference type="PhylomeDB" id="Q8VI94"/>
<dbReference type="TreeFam" id="TF329749"/>
<dbReference type="Reactome" id="R-MMU-8983711">
    <property type="pathway name" value="OAS antiviral response"/>
</dbReference>
<dbReference type="BioGRID-ORCS" id="231655">
    <property type="hits" value="2 hits in 78 CRISPR screens"/>
</dbReference>
<dbReference type="CD-CODE" id="D12E4DB9">
    <property type="entry name" value="Stress granule"/>
</dbReference>
<dbReference type="PRO" id="PR:Q8VI94"/>
<dbReference type="Proteomes" id="UP000000589">
    <property type="component" value="Chromosome 5"/>
</dbReference>
<dbReference type="RNAct" id="Q8VI94">
    <property type="molecule type" value="protein"/>
</dbReference>
<dbReference type="Bgee" id="ENSMUSG00000041827">
    <property type="expression patterns" value="Expressed in small intestine Peyer's patch and 75 other cell types or tissues"/>
</dbReference>
<dbReference type="GO" id="GO:0005737">
    <property type="term" value="C:cytoplasm"/>
    <property type="evidence" value="ECO:0000250"/>
    <property type="project" value="UniProtKB"/>
</dbReference>
<dbReference type="GO" id="GO:0005829">
    <property type="term" value="C:cytosol"/>
    <property type="evidence" value="ECO:0007669"/>
    <property type="project" value="Ensembl"/>
</dbReference>
<dbReference type="GO" id="GO:0005730">
    <property type="term" value="C:nucleolus"/>
    <property type="evidence" value="ECO:0000250"/>
    <property type="project" value="UniProtKB"/>
</dbReference>
<dbReference type="GO" id="GO:0005654">
    <property type="term" value="C:nucleoplasm"/>
    <property type="evidence" value="ECO:0007669"/>
    <property type="project" value="Ensembl"/>
</dbReference>
<dbReference type="GO" id="GO:0003677">
    <property type="term" value="F:DNA binding"/>
    <property type="evidence" value="ECO:0000250"/>
    <property type="project" value="UniProtKB"/>
</dbReference>
<dbReference type="GO" id="GO:0003725">
    <property type="term" value="F:double-stranded RNA binding"/>
    <property type="evidence" value="ECO:0000314"/>
    <property type="project" value="MGI"/>
</dbReference>
<dbReference type="GO" id="GO:0016779">
    <property type="term" value="F:nucleotidyltransferase activity"/>
    <property type="evidence" value="ECO:0007669"/>
    <property type="project" value="InterPro"/>
</dbReference>
<dbReference type="GO" id="GO:0051607">
    <property type="term" value="P:defense response to virus"/>
    <property type="evidence" value="ECO:0007669"/>
    <property type="project" value="UniProtKB-KW"/>
</dbReference>
<dbReference type="GO" id="GO:0045087">
    <property type="term" value="P:innate immune response"/>
    <property type="evidence" value="ECO:0007669"/>
    <property type="project" value="UniProtKB-KW"/>
</dbReference>
<dbReference type="GO" id="GO:0070106">
    <property type="term" value="P:interleukin-27-mediated signaling pathway"/>
    <property type="evidence" value="ECO:0000270"/>
    <property type="project" value="ARUK-UCL"/>
</dbReference>
<dbReference type="GO" id="GO:0045071">
    <property type="term" value="P:negative regulation of viral genome replication"/>
    <property type="evidence" value="ECO:0007669"/>
    <property type="project" value="Ensembl"/>
</dbReference>
<dbReference type="GO" id="GO:1900246">
    <property type="term" value="P:positive regulation of RIG-I signaling pathway"/>
    <property type="evidence" value="ECO:0007669"/>
    <property type="project" value="Ensembl"/>
</dbReference>
<dbReference type="GO" id="GO:0009615">
    <property type="term" value="P:response to virus"/>
    <property type="evidence" value="ECO:0000250"/>
    <property type="project" value="UniProtKB"/>
</dbReference>
<dbReference type="CDD" id="cd05400">
    <property type="entry name" value="NT_2-5OAS_ClassI-CCAase"/>
    <property type="match status" value="1"/>
</dbReference>
<dbReference type="CDD" id="cd01811">
    <property type="entry name" value="Ubl1_OASL"/>
    <property type="match status" value="1"/>
</dbReference>
<dbReference type="FunFam" id="3.10.20.90:FF:000205">
    <property type="entry name" value="2'-5'-oligoadenylate synthase-like protein 2"/>
    <property type="match status" value="1"/>
</dbReference>
<dbReference type="FunFam" id="1.10.1410.20:FF:000001">
    <property type="entry name" value="2'-5'-oligoadenylate synthetase 1"/>
    <property type="match status" value="1"/>
</dbReference>
<dbReference type="FunFam" id="3.30.460.10:FF:000007">
    <property type="entry name" value="2'-5'-oligoadenylate synthetase 1"/>
    <property type="match status" value="1"/>
</dbReference>
<dbReference type="Gene3D" id="1.10.1410.20">
    <property type="entry name" value="2'-5'-oligoadenylate synthetase 1, domain 2"/>
    <property type="match status" value="1"/>
</dbReference>
<dbReference type="Gene3D" id="3.30.460.10">
    <property type="entry name" value="Beta Polymerase, domain 2"/>
    <property type="match status" value="1"/>
</dbReference>
<dbReference type="Gene3D" id="3.10.20.90">
    <property type="entry name" value="Phosphatidylinositol 3-kinase Catalytic Subunit, Chain A, domain 1"/>
    <property type="match status" value="2"/>
</dbReference>
<dbReference type="InterPro" id="IPR018952">
    <property type="entry name" value="2-5-oligoAdlate_synth_1_dom2/C"/>
</dbReference>
<dbReference type="InterPro" id="IPR006117">
    <property type="entry name" value="2-5OAS_C_CS"/>
</dbReference>
<dbReference type="InterPro" id="IPR006116">
    <property type="entry name" value="NT_2-5OAS_ClassI-CCAase"/>
</dbReference>
<dbReference type="InterPro" id="IPR043519">
    <property type="entry name" value="NT_sf"/>
</dbReference>
<dbReference type="InterPro" id="IPR000626">
    <property type="entry name" value="Ubiquitin-like_dom"/>
</dbReference>
<dbReference type="InterPro" id="IPR029071">
    <property type="entry name" value="Ubiquitin-like_domsf"/>
</dbReference>
<dbReference type="PANTHER" id="PTHR11258:SF16">
    <property type="entry name" value="2'-5'-OLIGOADENYLATE SYNTHASE-LIKE PROTEIN"/>
    <property type="match status" value="1"/>
</dbReference>
<dbReference type="PANTHER" id="PTHR11258">
    <property type="entry name" value="2-5 OLIGOADENYLATE SYNTHETASE"/>
    <property type="match status" value="1"/>
</dbReference>
<dbReference type="Pfam" id="PF10421">
    <property type="entry name" value="OAS1_C"/>
    <property type="match status" value="1"/>
</dbReference>
<dbReference type="Pfam" id="PF00240">
    <property type="entry name" value="ubiquitin"/>
    <property type="match status" value="1"/>
</dbReference>
<dbReference type="SMART" id="SM00213">
    <property type="entry name" value="UBQ"/>
    <property type="match status" value="2"/>
</dbReference>
<dbReference type="SUPFAM" id="SSF81301">
    <property type="entry name" value="Nucleotidyltransferase"/>
    <property type="match status" value="1"/>
</dbReference>
<dbReference type="SUPFAM" id="SSF81631">
    <property type="entry name" value="PAP/OAS1 substrate-binding domain"/>
    <property type="match status" value="1"/>
</dbReference>
<dbReference type="SUPFAM" id="SSF54236">
    <property type="entry name" value="Ubiquitin-like"/>
    <property type="match status" value="2"/>
</dbReference>
<dbReference type="PROSITE" id="PS00833">
    <property type="entry name" value="25A_SYNTH_2"/>
    <property type="match status" value="1"/>
</dbReference>
<dbReference type="PROSITE" id="PS50152">
    <property type="entry name" value="25A_SYNTH_3"/>
    <property type="match status" value="1"/>
</dbReference>
<dbReference type="PROSITE" id="PS50053">
    <property type="entry name" value="UBIQUITIN_2"/>
    <property type="match status" value="1"/>
</dbReference>
<proteinExistence type="evidence at transcript level"/>
<name>OASL1_MOUSE</name>
<keyword id="KW-0051">Antiviral defense</keyword>
<keyword id="KW-0963">Cytoplasm</keyword>
<keyword id="KW-0391">Immunity</keyword>
<keyword id="KW-0399">Innate immunity</keyword>
<keyword id="KW-0539">Nucleus</keyword>
<keyword id="KW-1185">Reference proteome</keyword>
<keyword id="KW-0677">Repeat</keyword>
<keyword id="KW-0694">RNA-binding</keyword>
<organism>
    <name type="scientific">Mus musculus</name>
    <name type="common">Mouse</name>
    <dbReference type="NCBI Taxonomy" id="10090"/>
    <lineage>
        <taxon>Eukaryota</taxon>
        <taxon>Metazoa</taxon>
        <taxon>Chordata</taxon>
        <taxon>Craniata</taxon>
        <taxon>Vertebrata</taxon>
        <taxon>Euteleostomi</taxon>
        <taxon>Mammalia</taxon>
        <taxon>Eutheria</taxon>
        <taxon>Euarchontoglires</taxon>
        <taxon>Glires</taxon>
        <taxon>Rodentia</taxon>
        <taxon>Myomorpha</taxon>
        <taxon>Muroidea</taxon>
        <taxon>Muridae</taxon>
        <taxon>Murinae</taxon>
        <taxon>Mus</taxon>
        <taxon>Mus</taxon>
    </lineage>
</organism>
<evidence type="ECO:0000250" key="1"/>
<evidence type="ECO:0000255" key="2">
    <source>
        <dbReference type="PROSITE-ProRule" id="PRU00214"/>
    </source>
</evidence>
<evidence type="ECO:0000269" key="3">
    <source>
    </source>
</evidence>
<evidence type="ECO:0000269" key="4">
    <source>
    </source>
</evidence>
<evidence type="ECO:0000305" key="5"/>
<feature type="chain" id="PRO_0000418632" description="2'-5'-oligoadenylate synthase-like protein 1">
    <location>
        <begin position="1"/>
        <end position="511"/>
    </location>
</feature>
<feature type="domain" description="Ubiquitin-like 1" evidence="2">
    <location>
        <begin position="350"/>
        <end position="429"/>
    </location>
</feature>
<feature type="domain" description="Ubiquitin-like 2" evidence="2">
    <location>
        <begin position="430"/>
        <end position="506"/>
    </location>
</feature>
<feature type="sequence conflict" description="In Ref. 1; AAN31518 and 7; AAH32152." evidence="5" ref="1 7">
    <original>I</original>
    <variation>V</variation>
    <location>
        <position position="298"/>
    </location>
</feature>
<feature type="sequence conflict" description="In Ref. 1; AAN31518 and 7; AAH32152." evidence="5" ref="1 7">
    <original>V</original>
    <variation>I</variation>
    <location>
        <position position="339"/>
    </location>
</feature>
<feature type="sequence conflict" description="In Ref. 2; AAM08092." evidence="5" ref="2">
    <original>V</original>
    <variation>L</variation>
    <location>
        <position position="352"/>
    </location>
</feature>
<feature type="sequence conflict" description="In Ref. 2; AAM08092." evidence="5" ref="2">
    <original>E</original>
    <variation>D</variation>
    <location>
        <position position="356"/>
    </location>
</feature>
<feature type="sequence conflict" description="In Ref. 1; AAN31518 and 7; AAH32152." evidence="5" ref="1 7">
    <original>E</original>
    <variation>Q</variation>
    <location>
        <position position="356"/>
    </location>
</feature>
<feature type="sequence conflict" description="In Ref. 1; AAN31518 and 7; AAH32152." evidence="5" ref="1 7">
    <original>S</original>
    <variation>P</variation>
    <location>
        <position position="360"/>
    </location>
</feature>
<feature type="sequence conflict" description="In Ref. 2; AAM08092." evidence="5" ref="2">
    <original>S</original>
    <variation>T</variation>
    <location>
        <position position="382"/>
    </location>
</feature>
<feature type="sequence conflict" description="In Ref. 1; AAN31518 and 7; AAH32152." evidence="5" ref="1 7">
    <original>Q</original>
    <variation>R</variation>
    <location>
        <position position="383"/>
    </location>
</feature>
<feature type="sequence conflict" description="In Ref. 1; AAN31518 and 7; AAH32152." evidence="5" ref="1 7">
    <original>P</original>
    <variation>L</variation>
    <location>
        <position position="396"/>
    </location>
</feature>
<feature type="sequence conflict" description="In Ref. 1; AAN31518 and 7; AAH32152." evidence="5" ref="1 7">
    <original>F</original>
    <variation>L</variation>
    <location>
        <position position="485"/>
    </location>
</feature>
<feature type="sequence conflict" description="In Ref. 1; AAN31518 and 7; AAH32152." evidence="5" ref="1 7">
    <original>T</original>
    <variation>M</variation>
    <location>
        <position position="501"/>
    </location>
</feature>
<gene>
    <name type="primary">Oasl1</name>
    <name type="synonym">oasl9</name>
</gene>